<gene>
    <name evidence="1" type="primary">xseB</name>
    <name type="ordered locus">YE3153</name>
</gene>
<protein>
    <recommendedName>
        <fullName evidence="1">Exodeoxyribonuclease 7 small subunit</fullName>
        <ecNumber evidence="1">3.1.11.6</ecNumber>
    </recommendedName>
    <alternativeName>
        <fullName evidence="1">Exodeoxyribonuclease VII small subunit</fullName>
        <shortName evidence="1">Exonuclease VII small subunit</shortName>
    </alternativeName>
</protein>
<feature type="chain" id="PRO_0000303771" description="Exodeoxyribonuclease 7 small subunit">
    <location>
        <begin position="1"/>
        <end position="84"/>
    </location>
</feature>
<keyword id="KW-0963">Cytoplasm</keyword>
<keyword id="KW-0269">Exonuclease</keyword>
<keyword id="KW-0378">Hydrolase</keyword>
<keyword id="KW-0540">Nuclease</keyword>
<name>EX7S_YERE8</name>
<organism>
    <name type="scientific">Yersinia enterocolitica serotype O:8 / biotype 1B (strain NCTC 13174 / 8081)</name>
    <dbReference type="NCBI Taxonomy" id="393305"/>
    <lineage>
        <taxon>Bacteria</taxon>
        <taxon>Pseudomonadati</taxon>
        <taxon>Pseudomonadota</taxon>
        <taxon>Gammaproteobacteria</taxon>
        <taxon>Enterobacterales</taxon>
        <taxon>Yersiniaceae</taxon>
        <taxon>Yersinia</taxon>
    </lineage>
</organism>
<proteinExistence type="inferred from homology"/>
<sequence length="84" mass="9253">MPKKAASPETKAASFETSLSELEQIVTRLESGELPLEEALNEFERGVQLARIGQQTLLQAEQRVQVLLSDDVDAPLTPFTPDTE</sequence>
<dbReference type="EC" id="3.1.11.6" evidence="1"/>
<dbReference type="EMBL" id="AM286415">
    <property type="protein sequence ID" value="CAL13187.1"/>
    <property type="molecule type" value="Genomic_DNA"/>
</dbReference>
<dbReference type="RefSeq" id="WP_004393512.1">
    <property type="nucleotide sequence ID" value="NC_008800.1"/>
</dbReference>
<dbReference type="RefSeq" id="YP_001007334.1">
    <property type="nucleotide sequence ID" value="NC_008800.1"/>
</dbReference>
<dbReference type="SMR" id="A1JNR4"/>
<dbReference type="GeneID" id="61906973"/>
<dbReference type="KEGG" id="yen:YE3153"/>
<dbReference type="PATRIC" id="fig|393305.7.peg.3355"/>
<dbReference type="eggNOG" id="COG1722">
    <property type="taxonomic scope" value="Bacteria"/>
</dbReference>
<dbReference type="HOGENOM" id="CLU_145918_3_3_6"/>
<dbReference type="OrthoDB" id="5591562at2"/>
<dbReference type="Proteomes" id="UP000000642">
    <property type="component" value="Chromosome"/>
</dbReference>
<dbReference type="GO" id="GO:0005829">
    <property type="term" value="C:cytosol"/>
    <property type="evidence" value="ECO:0007669"/>
    <property type="project" value="TreeGrafter"/>
</dbReference>
<dbReference type="GO" id="GO:0009318">
    <property type="term" value="C:exodeoxyribonuclease VII complex"/>
    <property type="evidence" value="ECO:0007669"/>
    <property type="project" value="InterPro"/>
</dbReference>
<dbReference type="GO" id="GO:0008855">
    <property type="term" value="F:exodeoxyribonuclease VII activity"/>
    <property type="evidence" value="ECO:0007669"/>
    <property type="project" value="UniProtKB-UniRule"/>
</dbReference>
<dbReference type="GO" id="GO:0006308">
    <property type="term" value="P:DNA catabolic process"/>
    <property type="evidence" value="ECO:0007669"/>
    <property type="project" value="UniProtKB-UniRule"/>
</dbReference>
<dbReference type="FunFam" id="1.10.287.1040:FF:000001">
    <property type="entry name" value="Exodeoxyribonuclease 7 small subunit"/>
    <property type="match status" value="1"/>
</dbReference>
<dbReference type="Gene3D" id="1.10.287.1040">
    <property type="entry name" value="Exonuclease VII, small subunit"/>
    <property type="match status" value="1"/>
</dbReference>
<dbReference type="HAMAP" id="MF_00337">
    <property type="entry name" value="Exonuc_7_S"/>
    <property type="match status" value="1"/>
</dbReference>
<dbReference type="InterPro" id="IPR003761">
    <property type="entry name" value="Exonuc_VII_S"/>
</dbReference>
<dbReference type="InterPro" id="IPR037004">
    <property type="entry name" value="Exonuc_VII_ssu_sf"/>
</dbReference>
<dbReference type="NCBIfam" id="NF002137">
    <property type="entry name" value="PRK00977.1-1"/>
    <property type="match status" value="1"/>
</dbReference>
<dbReference type="NCBIfam" id="NF002140">
    <property type="entry name" value="PRK00977.1-4"/>
    <property type="match status" value="1"/>
</dbReference>
<dbReference type="NCBIfam" id="TIGR01280">
    <property type="entry name" value="xseB"/>
    <property type="match status" value="1"/>
</dbReference>
<dbReference type="PANTHER" id="PTHR34137">
    <property type="entry name" value="EXODEOXYRIBONUCLEASE 7 SMALL SUBUNIT"/>
    <property type="match status" value="1"/>
</dbReference>
<dbReference type="PANTHER" id="PTHR34137:SF1">
    <property type="entry name" value="EXODEOXYRIBONUCLEASE 7 SMALL SUBUNIT"/>
    <property type="match status" value="1"/>
</dbReference>
<dbReference type="Pfam" id="PF02609">
    <property type="entry name" value="Exonuc_VII_S"/>
    <property type="match status" value="1"/>
</dbReference>
<dbReference type="PIRSF" id="PIRSF006488">
    <property type="entry name" value="Exonuc_VII_S"/>
    <property type="match status" value="1"/>
</dbReference>
<dbReference type="SUPFAM" id="SSF116842">
    <property type="entry name" value="XseB-like"/>
    <property type="match status" value="1"/>
</dbReference>
<comment type="function">
    <text evidence="1">Bidirectionally degrades single-stranded DNA into large acid-insoluble oligonucleotides, which are then degraded further into small acid-soluble oligonucleotides.</text>
</comment>
<comment type="catalytic activity">
    <reaction evidence="1">
        <text>Exonucleolytic cleavage in either 5'- to 3'- or 3'- to 5'-direction to yield nucleoside 5'-phosphates.</text>
        <dbReference type="EC" id="3.1.11.6"/>
    </reaction>
</comment>
<comment type="subunit">
    <text evidence="1">Heterooligomer composed of large and small subunits.</text>
</comment>
<comment type="subcellular location">
    <subcellularLocation>
        <location evidence="1">Cytoplasm</location>
    </subcellularLocation>
</comment>
<comment type="similarity">
    <text evidence="1">Belongs to the XseB family.</text>
</comment>
<evidence type="ECO:0000255" key="1">
    <source>
        <dbReference type="HAMAP-Rule" id="MF_00337"/>
    </source>
</evidence>
<accession>A1JNR4</accession>
<reference key="1">
    <citation type="journal article" date="2006" name="PLoS Genet.">
        <title>The complete genome sequence and comparative genome analysis of the high pathogenicity Yersinia enterocolitica strain 8081.</title>
        <authorList>
            <person name="Thomson N.R."/>
            <person name="Howard S."/>
            <person name="Wren B.W."/>
            <person name="Holden M.T.G."/>
            <person name="Crossman L."/>
            <person name="Challis G.L."/>
            <person name="Churcher C."/>
            <person name="Mungall K."/>
            <person name="Brooks K."/>
            <person name="Chillingworth T."/>
            <person name="Feltwell T."/>
            <person name="Abdellah Z."/>
            <person name="Hauser H."/>
            <person name="Jagels K."/>
            <person name="Maddison M."/>
            <person name="Moule S."/>
            <person name="Sanders M."/>
            <person name="Whitehead S."/>
            <person name="Quail M.A."/>
            <person name="Dougan G."/>
            <person name="Parkhill J."/>
            <person name="Prentice M.B."/>
        </authorList>
    </citation>
    <scope>NUCLEOTIDE SEQUENCE [LARGE SCALE GENOMIC DNA]</scope>
    <source>
        <strain>NCTC 13174 / 8081</strain>
    </source>
</reference>